<protein>
    <recommendedName>
        <fullName evidence="1">Glutamyl-tRNA reductase</fullName>
        <shortName evidence="1">GluTR</shortName>
        <ecNumber evidence="1">1.2.1.70</ecNumber>
    </recommendedName>
</protein>
<accession>C1KVK4</accession>
<evidence type="ECO:0000255" key="1">
    <source>
        <dbReference type="HAMAP-Rule" id="MF_00087"/>
    </source>
</evidence>
<feature type="chain" id="PRO_1000202637" description="Glutamyl-tRNA reductase">
    <location>
        <begin position="1"/>
        <end position="435"/>
    </location>
</feature>
<feature type="active site" description="Nucleophile" evidence="1">
    <location>
        <position position="50"/>
    </location>
</feature>
<feature type="binding site" evidence="1">
    <location>
        <begin position="49"/>
        <end position="52"/>
    </location>
    <ligand>
        <name>substrate</name>
    </ligand>
</feature>
<feature type="binding site" evidence="1">
    <location>
        <position position="109"/>
    </location>
    <ligand>
        <name>substrate</name>
    </ligand>
</feature>
<feature type="binding site" evidence="1">
    <location>
        <begin position="114"/>
        <end position="116"/>
    </location>
    <ligand>
        <name>substrate</name>
    </ligand>
</feature>
<feature type="binding site" evidence="1">
    <location>
        <position position="120"/>
    </location>
    <ligand>
        <name>substrate</name>
    </ligand>
</feature>
<feature type="binding site" evidence="1">
    <location>
        <begin position="189"/>
        <end position="194"/>
    </location>
    <ligand>
        <name>NADP(+)</name>
        <dbReference type="ChEBI" id="CHEBI:58349"/>
    </ligand>
</feature>
<feature type="site" description="Important for activity" evidence="1">
    <location>
        <position position="99"/>
    </location>
</feature>
<comment type="function">
    <text evidence="1">Catalyzes the NADPH-dependent reduction of glutamyl-tRNA(Glu) to glutamate 1-semialdehyde (GSA).</text>
</comment>
<comment type="catalytic activity">
    <reaction evidence="1">
        <text>(S)-4-amino-5-oxopentanoate + tRNA(Glu) + NADP(+) = L-glutamyl-tRNA(Glu) + NADPH + H(+)</text>
        <dbReference type="Rhea" id="RHEA:12344"/>
        <dbReference type="Rhea" id="RHEA-COMP:9663"/>
        <dbReference type="Rhea" id="RHEA-COMP:9680"/>
        <dbReference type="ChEBI" id="CHEBI:15378"/>
        <dbReference type="ChEBI" id="CHEBI:57501"/>
        <dbReference type="ChEBI" id="CHEBI:57783"/>
        <dbReference type="ChEBI" id="CHEBI:58349"/>
        <dbReference type="ChEBI" id="CHEBI:78442"/>
        <dbReference type="ChEBI" id="CHEBI:78520"/>
        <dbReference type="EC" id="1.2.1.70"/>
    </reaction>
</comment>
<comment type="pathway">
    <text evidence="1">Porphyrin-containing compound metabolism; protoporphyrin-IX biosynthesis; 5-aminolevulinate from L-glutamyl-tRNA(Glu): step 1/2.</text>
</comment>
<comment type="subunit">
    <text evidence="1">Homodimer.</text>
</comment>
<comment type="domain">
    <text evidence="1">Possesses an unusual extended V-shaped dimeric structure with each monomer consisting of three distinct domains arranged along a curved 'spinal' alpha-helix. The N-terminal catalytic domain specifically recognizes the glutamate moiety of the substrate. The second domain is the NADPH-binding domain, and the third C-terminal domain is responsible for dimerization.</text>
</comment>
<comment type="miscellaneous">
    <text evidence="1">During catalysis, the active site Cys acts as a nucleophile attacking the alpha-carbonyl group of tRNA-bound glutamate with the formation of a thioester intermediate between enzyme and glutamate, and the concomitant release of tRNA(Glu). The thioester intermediate is finally reduced by direct hydride transfer from NADPH, to form the product GSA.</text>
</comment>
<comment type="similarity">
    <text evidence="1">Belongs to the glutamyl-tRNA reductase family.</text>
</comment>
<sequence>MFILTMGLNHHTAPIDIREKLVFKESEEEMALVTLQQEKSILENVIISTCNRTEIIAVVDQIHTGRYYLKRFMANWFQMDMEKIEPYLFFHEESDAVNHLYKVTAGLDSLVLGETQILGQVKHAFEIAKQTATTGTLLNKLFREVVTFAKKVHHHTKINENAVSVSYAAVEVAKKLYGSLDNKKIVLVGAGEMSELALQNLAGSGIADITIINRTKSNAELLANQFQAKVGAYENMNEHLMLADIVLVSTSAAEPIIKQAAMQDLMEQKASSMLVIDIGLPRNVEHDCSYIPNFHLYDIDDLAGVVSANSLERQRIVLELEKTIEAEVRNFFEWEKQLGVVPVIRALREKALDMQEVTMTSLENKLPGLTEREYIQIGKHMKSIINQMLKQPISELKEMSVEEDATTSIEHFKRIFGLSETDVTVIEKEQAETRS</sequence>
<organism>
    <name type="scientific">Listeria monocytogenes serotype 4b (strain CLIP80459)</name>
    <dbReference type="NCBI Taxonomy" id="568819"/>
    <lineage>
        <taxon>Bacteria</taxon>
        <taxon>Bacillati</taxon>
        <taxon>Bacillota</taxon>
        <taxon>Bacilli</taxon>
        <taxon>Bacillales</taxon>
        <taxon>Listeriaceae</taxon>
        <taxon>Listeria</taxon>
    </lineage>
</organism>
<keyword id="KW-0521">NADP</keyword>
<keyword id="KW-0560">Oxidoreductase</keyword>
<keyword id="KW-0627">Porphyrin biosynthesis</keyword>
<gene>
    <name evidence="1" type="primary">hemA</name>
    <name type="ordered locus">Lm4b_01568</name>
</gene>
<name>HEM1_LISMC</name>
<proteinExistence type="inferred from homology"/>
<dbReference type="EC" id="1.2.1.70" evidence="1"/>
<dbReference type="EMBL" id="FM242711">
    <property type="protein sequence ID" value="CAS05329.1"/>
    <property type="molecule type" value="Genomic_DNA"/>
</dbReference>
<dbReference type="RefSeq" id="WP_012681306.1">
    <property type="nucleotide sequence ID" value="NC_012488.1"/>
</dbReference>
<dbReference type="SMR" id="C1KVK4"/>
<dbReference type="KEGG" id="lmc:Lm4b_01568"/>
<dbReference type="HOGENOM" id="CLU_035113_2_2_9"/>
<dbReference type="UniPathway" id="UPA00251">
    <property type="reaction ID" value="UER00316"/>
</dbReference>
<dbReference type="GO" id="GO:0008883">
    <property type="term" value="F:glutamyl-tRNA reductase activity"/>
    <property type="evidence" value="ECO:0007669"/>
    <property type="project" value="UniProtKB-UniRule"/>
</dbReference>
<dbReference type="GO" id="GO:0050661">
    <property type="term" value="F:NADP binding"/>
    <property type="evidence" value="ECO:0007669"/>
    <property type="project" value="InterPro"/>
</dbReference>
<dbReference type="GO" id="GO:0006782">
    <property type="term" value="P:protoporphyrinogen IX biosynthetic process"/>
    <property type="evidence" value="ECO:0007669"/>
    <property type="project" value="UniProtKB-UniRule"/>
</dbReference>
<dbReference type="CDD" id="cd05213">
    <property type="entry name" value="NAD_bind_Glutamyl_tRNA_reduct"/>
    <property type="match status" value="1"/>
</dbReference>
<dbReference type="FunFam" id="3.30.460.30:FF:000001">
    <property type="entry name" value="Glutamyl-tRNA reductase"/>
    <property type="match status" value="1"/>
</dbReference>
<dbReference type="FunFam" id="3.40.50.720:FF:000031">
    <property type="entry name" value="Glutamyl-tRNA reductase"/>
    <property type="match status" value="1"/>
</dbReference>
<dbReference type="Gene3D" id="3.30.460.30">
    <property type="entry name" value="Glutamyl-tRNA reductase, N-terminal domain"/>
    <property type="match status" value="1"/>
</dbReference>
<dbReference type="Gene3D" id="3.40.50.720">
    <property type="entry name" value="NAD(P)-binding Rossmann-like Domain"/>
    <property type="match status" value="1"/>
</dbReference>
<dbReference type="HAMAP" id="MF_00087">
    <property type="entry name" value="Glu_tRNA_reductase"/>
    <property type="match status" value="1"/>
</dbReference>
<dbReference type="InterPro" id="IPR000343">
    <property type="entry name" value="4pyrrol_synth_GluRdtase"/>
</dbReference>
<dbReference type="InterPro" id="IPR015896">
    <property type="entry name" value="4pyrrol_synth_GluRdtase_dimer"/>
</dbReference>
<dbReference type="InterPro" id="IPR015895">
    <property type="entry name" value="4pyrrol_synth_GluRdtase_N"/>
</dbReference>
<dbReference type="InterPro" id="IPR018214">
    <property type="entry name" value="GluRdtase_CS"/>
</dbReference>
<dbReference type="InterPro" id="IPR036453">
    <property type="entry name" value="GluRdtase_dimer_dom_sf"/>
</dbReference>
<dbReference type="InterPro" id="IPR036343">
    <property type="entry name" value="GluRdtase_N_sf"/>
</dbReference>
<dbReference type="InterPro" id="IPR036291">
    <property type="entry name" value="NAD(P)-bd_dom_sf"/>
</dbReference>
<dbReference type="InterPro" id="IPR006151">
    <property type="entry name" value="Shikm_DH/Glu-tRNA_Rdtase"/>
</dbReference>
<dbReference type="NCBIfam" id="TIGR01035">
    <property type="entry name" value="hemA"/>
    <property type="match status" value="1"/>
</dbReference>
<dbReference type="PANTHER" id="PTHR43120">
    <property type="entry name" value="GLUTAMYL-TRNA REDUCTASE 1, CHLOROPLASTIC"/>
    <property type="match status" value="1"/>
</dbReference>
<dbReference type="PANTHER" id="PTHR43120:SF1">
    <property type="entry name" value="GLUTAMYL-TRNA REDUCTASE 1, CHLOROPLASTIC"/>
    <property type="match status" value="1"/>
</dbReference>
<dbReference type="Pfam" id="PF00745">
    <property type="entry name" value="GlutR_dimer"/>
    <property type="match status" value="1"/>
</dbReference>
<dbReference type="Pfam" id="PF05201">
    <property type="entry name" value="GlutR_N"/>
    <property type="match status" value="1"/>
</dbReference>
<dbReference type="Pfam" id="PF01488">
    <property type="entry name" value="Shikimate_DH"/>
    <property type="match status" value="1"/>
</dbReference>
<dbReference type="PIRSF" id="PIRSF000445">
    <property type="entry name" value="4pyrrol_synth_GluRdtase"/>
    <property type="match status" value="1"/>
</dbReference>
<dbReference type="SUPFAM" id="SSF69742">
    <property type="entry name" value="Glutamyl tRNA-reductase catalytic, N-terminal domain"/>
    <property type="match status" value="1"/>
</dbReference>
<dbReference type="SUPFAM" id="SSF69075">
    <property type="entry name" value="Glutamyl tRNA-reductase dimerization domain"/>
    <property type="match status" value="1"/>
</dbReference>
<dbReference type="SUPFAM" id="SSF51735">
    <property type="entry name" value="NAD(P)-binding Rossmann-fold domains"/>
    <property type="match status" value="1"/>
</dbReference>
<dbReference type="PROSITE" id="PS00747">
    <property type="entry name" value="GLUTR"/>
    <property type="match status" value="1"/>
</dbReference>
<reference key="1">
    <citation type="journal article" date="2012" name="BMC Genomics">
        <title>Comparative genomics and transcriptomics of lineages I, II, and III strains of Listeria monocytogenes.</title>
        <authorList>
            <person name="Hain T."/>
            <person name="Ghai R."/>
            <person name="Billion A."/>
            <person name="Kuenne C.T."/>
            <person name="Steinweg C."/>
            <person name="Izar B."/>
            <person name="Mohamed W."/>
            <person name="Mraheil M."/>
            <person name="Domann E."/>
            <person name="Schaffrath S."/>
            <person name="Karst U."/>
            <person name="Goesmann A."/>
            <person name="Oehm S."/>
            <person name="Puhler A."/>
            <person name="Merkl R."/>
            <person name="Vorwerk S."/>
            <person name="Glaser P."/>
            <person name="Garrido P."/>
            <person name="Rusniok C."/>
            <person name="Buchrieser C."/>
            <person name="Goebel W."/>
            <person name="Chakraborty T."/>
        </authorList>
    </citation>
    <scope>NUCLEOTIDE SEQUENCE [LARGE SCALE GENOMIC DNA]</scope>
    <source>
        <strain>CLIP80459</strain>
    </source>
</reference>